<proteinExistence type="inferred from homology"/>
<name>RL15_MYCPU</name>
<reference key="1">
    <citation type="journal article" date="2001" name="Nucleic Acids Res.">
        <title>The complete genome sequence of the murine respiratory pathogen Mycoplasma pulmonis.</title>
        <authorList>
            <person name="Chambaud I."/>
            <person name="Heilig R."/>
            <person name="Ferris S."/>
            <person name="Barbe V."/>
            <person name="Samson D."/>
            <person name="Galisson F."/>
            <person name="Moszer I."/>
            <person name="Dybvig K."/>
            <person name="Wroblewski H."/>
            <person name="Viari A."/>
            <person name="Rocha E.P.C."/>
            <person name="Blanchard A."/>
        </authorList>
    </citation>
    <scope>NUCLEOTIDE SEQUENCE [LARGE SCALE GENOMIC DNA]</scope>
    <source>
        <strain>UAB CTIP</strain>
    </source>
</reference>
<keyword id="KW-1185">Reference proteome</keyword>
<keyword id="KW-0687">Ribonucleoprotein</keyword>
<keyword id="KW-0689">Ribosomal protein</keyword>
<keyword id="KW-0694">RNA-binding</keyword>
<keyword id="KW-0699">rRNA-binding</keyword>
<accession>Q98Q00</accession>
<evidence type="ECO:0000255" key="1">
    <source>
        <dbReference type="HAMAP-Rule" id="MF_01341"/>
    </source>
</evidence>
<evidence type="ECO:0000256" key="2">
    <source>
        <dbReference type="SAM" id="MobiDB-lite"/>
    </source>
</evidence>
<evidence type="ECO:0000305" key="3"/>
<dbReference type="EMBL" id="AL445565">
    <property type="protein sequence ID" value="CAC13742.1"/>
    <property type="molecule type" value="Genomic_DNA"/>
</dbReference>
<dbReference type="PIR" id="A99583">
    <property type="entry name" value="A99583"/>
</dbReference>
<dbReference type="RefSeq" id="WP_010925370.1">
    <property type="nucleotide sequence ID" value="NC_002771.1"/>
</dbReference>
<dbReference type="SMR" id="Q98Q00"/>
<dbReference type="STRING" id="272635.gene:17577176"/>
<dbReference type="KEGG" id="mpu:MYPU_5690"/>
<dbReference type="eggNOG" id="COG0200">
    <property type="taxonomic scope" value="Bacteria"/>
</dbReference>
<dbReference type="HOGENOM" id="CLU_055188_4_1_14"/>
<dbReference type="BioCyc" id="MPUL272635:G1GT6-582-MONOMER"/>
<dbReference type="Proteomes" id="UP000000528">
    <property type="component" value="Chromosome"/>
</dbReference>
<dbReference type="GO" id="GO:0022625">
    <property type="term" value="C:cytosolic large ribosomal subunit"/>
    <property type="evidence" value="ECO:0007669"/>
    <property type="project" value="TreeGrafter"/>
</dbReference>
<dbReference type="GO" id="GO:0019843">
    <property type="term" value="F:rRNA binding"/>
    <property type="evidence" value="ECO:0007669"/>
    <property type="project" value="UniProtKB-UniRule"/>
</dbReference>
<dbReference type="GO" id="GO:0003735">
    <property type="term" value="F:structural constituent of ribosome"/>
    <property type="evidence" value="ECO:0007669"/>
    <property type="project" value="InterPro"/>
</dbReference>
<dbReference type="GO" id="GO:0006412">
    <property type="term" value="P:translation"/>
    <property type="evidence" value="ECO:0007669"/>
    <property type="project" value="UniProtKB-UniRule"/>
</dbReference>
<dbReference type="Gene3D" id="3.100.10.10">
    <property type="match status" value="1"/>
</dbReference>
<dbReference type="HAMAP" id="MF_01341">
    <property type="entry name" value="Ribosomal_uL15"/>
    <property type="match status" value="1"/>
</dbReference>
<dbReference type="InterPro" id="IPR030878">
    <property type="entry name" value="Ribosomal_uL15"/>
</dbReference>
<dbReference type="InterPro" id="IPR021131">
    <property type="entry name" value="Ribosomal_uL15/eL18"/>
</dbReference>
<dbReference type="InterPro" id="IPR036227">
    <property type="entry name" value="Ribosomal_uL15/eL18_sf"/>
</dbReference>
<dbReference type="InterPro" id="IPR005749">
    <property type="entry name" value="Ribosomal_uL15_bac-type"/>
</dbReference>
<dbReference type="InterPro" id="IPR001196">
    <property type="entry name" value="Ribosomal_uL15_CS"/>
</dbReference>
<dbReference type="NCBIfam" id="TIGR01071">
    <property type="entry name" value="rplO_bact"/>
    <property type="match status" value="1"/>
</dbReference>
<dbReference type="PANTHER" id="PTHR12934">
    <property type="entry name" value="50S RIBOSOMAL PROTEIN L15"/>
    <property type="match status" value="1"/>
</dbReference>
<dbReference type="PANTHER" id="PTHR12934:SF11">
    <property type="entry name" value="LARGE RIBOSOMAL SUBUNIT PROTEIN UL15M"/>
    <property type="match status" value="1"/>
</dbReference>
<dbReference type="Pfam" id="PF00828">
    <property type="entry name" value="Ribosomal_L27A"/>
    <property type="match status" value="1"/>
</dbReference>
<dbReference type="SUPFAM" id="SSF52080">
    <property type="entry name" value="Ribosomal proteins L15p and L18e"/>
    <property type="match status" value="1"/>
</dbReference>
<dbReference type="PROSITE" id="PS00475">
    <property type="entry name" value="RIBOSOMAL_L15"/>
    <property type="match status" value="1"/>
</dbReference>
<feature type="chain" id="PRO_0000104766" description="Large ribosomal subunit protein uL15">
    <location>
        <begin position="1"/>
        <end position="145"/>
    </location>
</feature>
<feature type="region of interest" description="Disordered" evidence="2">
    <location>
        <begin position="1"/>
        <end position="48"/>
    </location>
</feature>
<feature type="compositionally biased region" description="Polar residues" evidence="2">
    <location>
        <begin position="1"/>
        <end position="11"/>
    </location>
</feature>
<feature type="compositionally biased region" description="Basic residues" evidence="2">
    <location>
        <begin position="14"/>
        <end position="26"/>
    </location>
</feature>
<protein>
    <recommendedName>
        <fullName evidence="1">Large ribosomal subunit protein uL15</fullName>
    </recommendedName>
    <alternativeName>
        <fullName evidence="3">50S ribosomal protein L15</fullName>
    </alternativeName>
</protein>
<comment type="function">
    <text evidence="1">Binds to the 23S rRNA.</text>
</comment>
<comment type="subunit">
    <text evidence="1">Part of the 50S ribosomal subunit.</text>
</comment>
<comment type="similarity">
    <text evidence="1">Belongs to the universal ribosomal protein uL15 family.</text>
</comment>
<gene>
    <name evidence="1" type="primary">rplO</name>
    <name type="ordered locus">MYPU_5690</name>
</gene>
<sequence>MELHSLKSTPGSRKEKHRKGRGHAAGKGKQAGKGQSGQRKRSKVRLGFEGGQNPWFRRLPKRGFKNINHIEYQPLSLEALEKHFLENEVVDLEKIYEKRLVTKRTLPVKLLANGKLTKKLTIHVHSASQSAIQAVESLGGKVEVL</sequence>
<organism>
    <name type="scientific">Mycoplasmopsis pulmonis (strain UAB CTIP)</name>
    <name type="common">Mycoplasma pulmonis</name>
    <dbReference type="NCBI Taxonomy" id="272635"/>
    <lineage>
        <taxon>Bacteria</taxon>
        <taxon>Bacillati</taxon>
        <taxon>Mycoplasmatota</taxon>
        <taxon>Mycoplasmoidales</taxon>
        <taxon>Metamycoplasmataceae</taxon>
        <taxon>Mycoplasmopsis</taxon>
    </lineage>
</organism>